<accession>Q8X4N7</accession>
<accession>Q7AB51</accession>
<proteinExistence type="inferred from homology"/>
<name>LPLT_ECO57</name>
<dbReference type="EMBL" id="AE005174">
    <property type="protein sequence ID" value="AAG57947.1"/>
    <property type="molecule type" value="Genomic_DNA"/>
</dbReference>
<dbReference type="EMBL" id="BA000007">
    <property type="protein sequence ID" value="BAB37115.1"/>
    <property type="molecule type" value="Genomic_DNA"/>
</dbReference>
<dbReference type="PIR" id="D91090">
    <property type="entry name" value="D91090"/>
</dbReference>
<dbReference type="PIR" id="G85935">
    <property type="entry name" value="G85935"/>
</dbReference>
<dbReference type="RefSeq" id="NP_311719.1">
    <property type="nucleotide sequence ID" value="NC_002695.1"/>
</dbReference>
<dbReference type="RefSeq" id="WP_000004620.1">
    <property type="nucleotide sequence ID" value="NZ_VOAI01000003.1"/>
</dbReference>
<dbReference type="SMR" id="Q8X4N7"/>
<dbReference type="STRING" id="155864.Z4153"/>
<dbReference type="GeneID" id="916494"/>
<dbReference type="KEGG" id="ece:Z4153"/>
<dbReference type="KEGG" id="ecs:ECs_3692"/>
<dbReference type="PATRIC" id="fig|386585.9.peg.3859"/>
<dbReference type="eggNOG" id="COG0477">
    <property type="taxonomic scope" value="Bacteria"/>
</dbReference>
<dbReference type="HOGENOM" id="CLU_047399_0_0_6"/>
<dbReference type="OMA" id="ICFGFNP"/>
<dbReference type="Proteomes" id="UP000000558">
    <property type="component" value="Chromosome"/>
</dbReference>
<dbReference type="Proteomes" id="UP000002519">
    <property type="component" value="Chromosome"/>
</dbReference>
<dbReference type="GO" id="GO:0005886">
    <property type="term" value="C:plasma membrane"/>
    <property type="evidence" value="ECO:0007669"/>
    <property type="project" value="UniProtKB-SubCell"/>
</dbReference>
<dbReference type="GO" id="GO:0051978">
    <property type="term" value="F:lysophospholipid:sodium symporter activity"/>
    <property type="evidence" value="ECO:0007669"/>
    <property type="project" value="InterPro"/>
</dbReference>
<dbReference type="CDD" id="cd06173">
    <property type="entry name" value="MFS_MefA_like"/>
    <property type="match status" value="1"/>
</dbReference>
<dbReference type="FunFam" id="1.20.1250.20:FF:000091">
    <property type="entry name" value="Lysophospholipid transporter LplT"/>
    <property type="match status" value="1"/>
</dbReference>
<dbReference type="Gene3D" id="1.20.1250.20">
    <property type="entry name" value="MFS general substrate transporter like domains"/>
    <property type="match status" value="1"/>
</dbReference>
<dbReference type="HAMAP" id="MF_01585">
    <property type="entry name" value="MFS_LplT"/>
    <property type="match status" value="1"/>
</dbReference>
<dbReference type="InterPro" id="IPR023727">
    <property type="entry name" value="LysoPLipid__transptr_LplT"/>
</dbReference>
<dbReference type="InterPro" id="IPR011701">
    <property type="entry name" value="MFS"/>
</dbReference>
<dbReference type="InterPro" id="IPR036259">
    <property type="entry name" value="MFS_trans_sf"/>
</dbReference>
<dbReference type="NCBIfam" id="NF008397">
    <property type="entry name" value="PRK11195.1"/>
    <property type="match status" value="1"/>
</dbReference>
<dbReference type="PANTHER" id="PTHR43266">
    <property type="entry name" value="MACROLIDE-EFFLUX PROTEIN"/>
    <property type="match status" value="1"/>
</dbReference>
<dbReference type="PANTHER" id="PTHR43266:SF2">
    <property type="entry name" value="MAJOR FACILITATOR SUPERFAMILY (MFS) PROFILE DOMAIN-CONTAINING PROTEIN"/>
    <property type="match status" value="1"/>
</dbReference>
<dbReference type="Pfam" id="PF07690">
    <property type="entry name" value="MFS_1"/>
    <property type="match status" value="1"/>
</dbReference>
<dbReference type="SUPFAM" id="SSF103473">
    <property type="entry name" value="MFS general substrate transporter"/>
    <property type="match status" value="1"/>
</dbReference>
<comment type="function">
    <text evidence="1">Catalyzes the facilitated diffusion of 2-acyl-glycero-3-phosphoethanolamine (2-acyl-GPE) into the cell.</text>
</comment>
<comment type="subcellular location">
    <subcellularLocation>
        <location evidence="1">Cell inner membrane</location>
        <topology evidence="1">Multi-pass membrane protein</topology>
    </subcellularLocation>
</comment>
<comment type="similarity">
    <text evidence="1">Belongs to the major facilitator superfamily. LplT (TC 2.A.1.42) family.</text>
</comment>
<gene>
    <name evidence="1" type="primary">lplT</name>
    <name type="ordered locus">Z4153</name>
    <name type="ordered locus">ECs3692</name>
</gene>
<sequence length="397" mass="41639">MSESVHTNTSLWSKGMKAVIVAQFLSAFGDNALLFATLALLKAQFYPEWSQPILQMVFVGAYILFAPFVGQVADSFAKGRVMMFANGLKLLGAASICFGINPFLGYTLVGVGAAAYSPAKYGILGELTTGSKLVKANGLMEASTIAAILLGSVAGGVLADWHVLVALAACALAYGGAVVANIYIPKLAAARPGQSWNLINMTRSFLNACTSLWRNGETRFSLVGTSLFWGAGVTLRFLLVLWVPVALGITDNATPTYLNAMVAIGIVVGAGAAAKLVTLETVSRCMPAGILIGVVVLIFSLQHEQLPAYALLMLIGVLGGFFVVPLNALLQERGKKSVGAGNAIAVQNLGENSAMLLMLGIYSLAVMVGIPVVPIGIGFGALFALAITALWIWQRRH</sequence>
<organism>
    <name type="scientific">Escherichia coli O157:H7</name>
    <dbReference type="NCBI Taxonomy" id="83334"/>
    <lineage>
        <taxon>Bacteria</taxon>
        <taxon>Pseudomonadati</taxon>
        <taxon>Pseudomonadota</taxon>
        <taxon>Gammaproteobacteria</taxon>
        <taxon>Enterobacterales</taxon>
        <taxon>Enterobacteriaceae</taxon>
        <taxon>Escherichia</taxon>
    </lineage>
</organism>
<feature type="chain" id="PRO_0000309825" description="Lysophospholipid transporter LplT">
    <location>
        <begin position="1"/>
        <end position="397"/>
    </location>
</feature>
<feature type="topological domain" description="Periplasmic" evidence="1">
    <location>
        <begin position="1"/>
        <end position="17"/>
    </location>
</feature>
<feature type="transmembrane region" description="Helical" evidence="1">
    <location>
        <begin position="18"/>
        <end position="38"/>
    </location>
</feature>
<feature type="topological domain" description="Cytoplasmic" evidence="1">
    <location>
        <begin position="39"/>
        <end position="52"/>
    </location>
</feature>
<feature type="transmembrane region" description="Helical" evidence="1">
    <location>
        <begin position="53"/>
        <end position="73"/>
    </location>
</feature>
<feature type="topological domain" description="Periplasmic" evidence="1">
    <location>
        <begin position="74"/>
        <end position="90"/>
    </location>
</feature>
<feature type="transmembrane region" description="Helical" evidence="1">
    <location>
        <begin position="91"/>
        <end position="111"/>
    </location>
</feature>
<feature type="topological domain" description="Cytoplasmic" evidence="1">
    <location>
        <begin position="112"/>
        <end position="144"/>
    </location>
</feature>
<feature type="transmembrane region" description="Helical" evidence="1">
    <location>
        <begin position="145"/>
        <end position="165"/>
    </location>
</feature>
<feature type="topological domain" description="Periplasmic" evidence="1">
    <location>
        <position position="166"/>
    </location>
</feature>
<feature type="transmembrane region" description="Helical" evidence="1">
    <location>
        <begin position="167"/>
        <end position="187"/>
    </location>
</feature>
<feature type="topological domain" description="Cytoplasmic" evidence="1">
    <location>
        <begin position="188"/>
        <end position="226"/>
    </location>
</feature>
<feature type="transmembrane region" description="Helical" evidence="1">
    <location>
        <begin position="227"/>
        <end position="247"/>
    </location>
</feature>
<feature type="topological domain" description="Periplasmic" evidence="1">
    <location>
        <begin position="248"/>
        <end position="256"/>
    </location>
</feature>
<feature type="transmembrane region" description="Helical" evidence="1">
    <location>
        <begin position="257"/>
        <end position="277"/>
    </location>
</feature>
<feature type="topological domain" description="Cytoplasmic" evidence="1">
    <location>
        <begin position="278"/>
        <end position="280"/>
    </location>
</feature>
<feature type="transmembrane region" description="Helical" evidence="1">
    <location>
        <begin position="281"/>
        <end position="301"/>
    </location>
</feature>
<feature type="topological domain" description="Periplasmic" evidence="1">
    <location>
        <begin position="302"/>
        <end position="304"/>
    </location>
</feature>
<feature type="transmembrane region" description="Helical" evidence="1">
    <location>
        <begin position="305"/>
        <end position="325"/>
    </location>
</feature>
<feature type="topological domain" description="Cytoplasmic" evidence="1">
    <location>
        <begin position="326"/>
        <end position="343"/>
    </location>
</feature>
<feature type="transmembrane region" description="Helical" evidence="1">
    <location>
        <begin position="344"/>
        <end position="364"/>
    </location>
</feature>
<feature type="topological domain" description="Periplasmic" evidence="1">
    <location>
        <begin position="365"/>
        <end position="366"/>
    </location>
</feature>
<feature type="transmembrane region" description="Helical" evidence="1">
    <location>
        <begin position="367"/>
        <end position="387"/>
    </location>
</feature>
<feature type="topological domain" description="Cytoplasmic" evidence="1">
    <location>
        <begin position="388"/>
        <end position="397"/>
    </location>
</feature>
<protein>
    <recommendedName>
        <fullName evidence="1">Lysophospholipid transporter LplT</fullName>
    </recommendedName>
</protein>
<keyword id="KW-0997">Cell inner membrane</keyword>
<keyword id="KW-1003">Cell membrane</keyword>
<keyword id="KW-0445">Lipid transport</keyword>
<keyword id="KW-0472">Membrane</keyword>
<keyword id="KW-1185">Reference proteome</keyword>
<keyword id="KW-0812">Transmembrane</keyword>
<keyword id="KW-1133">Transmembrane helix</keyword>
<keyword id="KW-0813">Transport</keyword>
<reference key="1">
    <citation type="journal article" date="2001" name="Nature">
        <title>Genome sequence of enterohaemorrhagic Escherichia coli O157:H7.</title>
        <authorList>
            <person name="Perna N.T."/>
            <person name="Plunkett G. III"/>
            <person name="Burland V."/>
            <person name="Mau B."/>
            <person name="Glasner J.D."/>
            <person name="Rose D.J."/>
            <person name="Mayhew G.F."/>
            <person name="Evans P.S."/>
            <person name="Gregor J."/>
            <person name="Kirkpatrick H.A."/>
            <person name="Posfai G."/>
            <person name="Hackett J."/>
            <person name="Klink S."/>
            <person name="Boutin A."/>
            <person name="Shao Y."/>
            <person name="Miller L."/>
            <person name="Grotbeck E.J."/>
            <person name="Davis N.W."/>
            <person name="Lim A."/>
            <person name="Dimalanta E.T."/>
            <person name="Potamousis K."/>
            <person name="Apodaca J."/>
            <person name="Anantharaman T.S."/>
            <person name="Lin J."/>
            <person name="Yen G."/>
            <person name="Schwartz D.C."/>
            <person name="Welch R.A."/>
            <person name="Blattner F.R."/>
        </authorList>
    </citation>
    <scope>NUCLEOTIDE SEQUENCE [LARGE SCALE GENOMIC DNA]</scope>
    <source>
        <strain>O157:H7 / EDL933 / ATCC 700927 / EHEC</strain>
    </source>
</reference>
<reference key="2">
    <citation type="journal article" date="2001" name="DNA Res.">
        <title>Complete genome sequence of enterohemorrhagic Escherichia coli O157:H7 and genomic comparison with a laboratory strain K-12.</title>
        <authorList>
            <person name="Hayashi T."/>
            <person name="Makino K."/>
            <person name="Ohnishi M."/>
            <person name="Kurokawa K."/>
            <person name="Ishii K."/>
            <person name="Yokoyama K."/>
            <person name="Han C.-G."/>
            <person name="Ohtsubo E."/>
            <person name="Nakayama K."/>
            <person name="Murata T."/>
            <person name="Tanaka M."/>
            <person name="Tobe T."/>
            <person name="Iida T."/>
            <person name="Takami H."/>
            <person name="Honda T."/>
            <person name="Sasakawa C."/>
            <person name="Ogasawara N."/>
            <person name="Yasunaga T."/>
            <person name="Kuhara S."/>
            <person name="Shiba T."/>
            <person name="Hattori M."/>
            <person name="Shinagawa H."/>
        </authorList>
    </citation>
    <scope>NUCLEOTIDE SEQUENCE [LARGE SCALE GENOMIC DNA]</scope>
    <source>
        <strain>O157:H7 / Sakai / RIMD 0509952 / EHEC</strain>
    </source>
</reference>
<evidence type="ECO:0000255" key="1">
    <source>
        <dbReference type="HAMAP-Rule" id="MF_01585"/>
    </source>
</evidence>